<organism>
    <name type="scientific">Latilactobacillus sakei subsp. sakei (strain 23K)</name>
    <name type="common">Lactobacillus sakei subsp. sakei</name>
    <dbReference type="NCBI Taxonomy" id="314315"/>
    <lineage>
        <taxon>Bacteria</taxon>
        <taxon>Bacillati</taxon>
        <taxon>Bacillota</taxon>
        <taxon>Bacilli</taxon>
        <taxon>Lactobacillales</taxon>
        <taxon>Lactobacillaceae</taxon>
        <taxon>Latilactobacillus</taxon>
    </lineage>
</organism>
<gene>
    <name evidence="2" type="primary">deoD</name>
    <name type="ordered locus">LCA_0797</name>
</gene>
<proteinExistence type="inferred from homology"/>
<reference key="1">
    <citation type="journal article" date="2005" name="Nat. Biotechnol.">
        <title>The complete genome sequence of the meat-borne lactic acid bacterium Lactobacillus sakei 23K.</title>
        <authorList>
            <person name="Chaillou S."/>
            <person name="Champomier-Verges M.-C."/>
            <person name="Cornet M."/>
            <person name="Crutz-Le Coq A.-M."/>
            <person name="Dudez A.-M."/>
            <person name="Martin V."/>
            <person name="Beaufils S."/>
            <person name="Darbon-Rongere E."/>
            <person name="Bossy R."/>
            <person name="Loux V."/>
            <person name="Zagorec M."/>
        </authorList>
    </citation>
    <scope>NUCLEOTIDE SEQUENCE [LARGE SCALE GENOMIC DNA]</scope>
    <source>
        <strain>23K</strain>
    </source>
</reference>
<protein>
    <recommendedName>
        <fullName evidence="2">Purine nucleoside phosphorylase DeoD-type</fullName>
        <shortName evidence="2">PNP</shortName>
        <ecNumber evidence="2">2.4.2.1</ecNumber>
    </recommendedName>
</protein>
<keyword id="KW-0328">Glycosyltransferase</keyword>
<keyword id="KW-1185">Reference proteome</keyword>
<keyword id="KW-0808">Transferase</keyword>
<feature type="chain" id="PRO_1000186210" description="Purine nucleoside phosphorylase DeoD-type">
    <location>
        <begin position="1"/>
        <end position="234"/>
    </location>
</feature>
<feature type="binding site" evidence="1">
    <location>
        <position position="4"/>
    </location>
    <ligand>
        <name>a purine D-ribonucleoside</name>
        <dbReference type="ChEBI" id="CHEBI:142355"/>
        <note>ligand shared between dimeric partners</note>
    </ligand>
</feature>
<feature type="binding site" description="in other chain" evidence="1">
    <location>
        <position position="20"/>
    </location>
    <ligand>
        <name>phosphate</name>
        <dbReference type="ChEBI" id="CHEBI:43474"/>
        <note>ligand shared between dimeric partners</note>
    </ligand>
</feature>
<feature type="binding site" description="in other chain" evidence="1">
    <location>
        <position position="24"/>
    </location>
    <ligand>
        <name>phosphate</name>
        <dbReference type="ChEBI" id="CHEBI:43474"/>
        <note>ligand shared between dimeric partners</note>
    </ligand>
</feature>
<feature type="binding site" evidence="1">
    <location>
        <position position="43"/>
    </location>
    <ligand>
        <name>phosphate</name>
        <dbReference type="ChEBI" id="CHEBI:43474"/>
        <note>ligand shared between dimeric partners</note>
    </ligand>
</feature>
<feature type="binding site" description="in other chain" evidence="1">
    <location>
        <begin position="87"/>
        <end position="90"/>
    </location>
    <ligand>
        <name>phosphate</name>
        <dbReference type="ChEBI" id="CHEBI:43474"/>
        <note>ligand shared between dimeric partners</note>
    </ligand>
</feature>
<feature type="binding site" description="in other chain" evidence="1">
    <location>
        <begin position="179"/>
        <end position="181"/>
    </location>
    <ligand>
        <name>a purine D-ribonucleoside</name>
        <dbReference type="ChEBI" id="CHEBI:142355"/>
        <note>ligand shared between dimeric partners</note>
    </ligand>
</feature>
<feature type="binding site" description="in other chain" evidence="1">
    <location>
        <begin position="203"/>
        <end position="204"/>
    </location>
    <ligand>
        <name>a purine D-ribonucleoside</name>
        <dbReference type="ChEBI" id="CHEBI:142355"/>
        <note>ligand shared between dimeric partners</note>
    </ligand>
</feature>
<feature type="site" description="Important for catalytic activity" evidence="2">
    <location>
        <position position="217"/>
    </location>
</feature>
<accession>Q38XI0</accession>
<name>DEOD_LATSS</name>
<sequence length="234" mass="25522">MSTHIEAQQGDIAETVLLPGDPLRAKYIAETFLTDVHRYNTIRNAFGYTGYYKGQAISVQASGMGIPSISIYANELIQFYGVKRLIRVGTCGGLGTDVHVRDVMIAQSASTDSAIIQNTFGAGLYYAPTADFKLLMKAYQAAQQAQIAVKVGNILSEDRFYNDEIDRQKLIQYGVLGSEMEAAALYMLAAKFNVQALAVLTISNHIITGEETSAEEREKSFNEMITVALEAGIA</sequence>
<evidence type="ECO:0000250" key="1">
    <source>
        <dbReference type="UniProtKB" id="P50389"/>
    </source>
</evidence>
<evidence type="ECO:0000255" key="2">
    <source>
        <dbReference type="HAMAP-Rule" id="MF_01627"/>
    </source>
</evidence>
<comment type="function">
    <text evidence="2">Catalyzes the reversible phosphorolytic breakdown of the N-glycosidic bond in the beta-(deoxy)ribonucleoside molecules, with the formation of the corresponding free purine bases and pentose-1-phosphate.</text>
</comment>
<comment type="catalytic activity">
    <reaction evidence="2">
        <text>a purine D-ribonucleoside + phosphate = a purine nucleobase + alpha-D-ribose 1-phosphate</text>
        <dbReference type="Rhea" id="RHEA:19805"/>
        <dbReference type="ChEBI" id="CHEBI:26386"/>
        <dbReference type="ChEBI" id="CHEBI:43474"/>
        <dbReference type="ChEBI" id="CHEBI:57720"/>
        <dbReference type="ChEBI" id="CHEBI:142355"/>
        <dbReference type="EC" id="2.4.2.1"/>
    </reaction>
</comment>
<comment type="catalytic activity">
    <reaction evidence="2">
        <text>a purine 2'-deoxy-D-ribonucleoside + phosphate = a purine nucleobase + 2-deoxy-alpha-D-ribose 1-phosphate</text>
        <dbReference type="Rhea" id="RHEA:36431"/>
        <dbReference type="ChEBI" id="CHEBI:26386"/>
        <dbReference type="ChEBI" id="CHEBI:43474"/>
        <dbReference type="ChEBI" id="CHEBI:57259"/>
        <dbReference type="ChEBI" id="CHEBI:142361"/>
        <dbReference type="EC" id="2.4.2.1"/>
    </reaction>
</comment>
<comment type="subunit">
    <text evidence="2">Homohexamer; trimer of homodimers.</text>
</comment>
<comment type="similarity">
    <text evidence="2">Belongs to the PNP/UDP phosphorylase family.</text>
</comment>
<dbReference type="EC" id="2.4.2.1" evidence="2"/>
<dbReference type="EMBL" id="CR936503">
    <property type="protein sequence ID" value="CAI55101.1"/>
    <property type="molecule type" value="Genomic_DNA"/>
</dbReference>
<dbReference type="RefSeq" id="WP_011374503.1">
    <property type="nucleotide sequence ID" value="NC_007576.1"/>
</dbReference>
<dbReference type="SMR" id="Q38XI0"/>
<dbReference type="STRING" id="314315.LCA_0797"/>
<dbReference type="KEGG" id="lsa:LCA_0797"/>
<dbReference type="eggNOG" id="COG0813">
    <property type="taxonomic scope" value="Bacteria"/>
</dbReference>
<dbReference type="HOGENOM" id="CLU_068457_2_0_9"/>
<dbReference type="OrthoDB" id="9782889at2"/>
<dbReference type="Proteomes" id="UP000002707">
    <property type="component" value="Chromosome"/>
</dbReference>
<dbReference type="GO" id="GO:0005829">
    <property type="term" value="C:cytosol"/>
    <property type="evidence" value="ECO:0007669"/>
    <property type="project" value="TreeGrafter"/>
</dbReference>
<dbReference type="GO" id="GO:0004731">
    <property type="term" value="F:purine-nucleoside phosphorylase activity"/>
    <property type="evidence" value="ECO:0007669"/>
    <property type="project" value="UniProtKB-UniRule"/>
</dbReference>
<dbReference type="GO" id="GO:0006152">
    <property type="term" value="P:purine nucleoside catabolic process"/>
    <property type="evidence" value="ECO:0007669"/>
    <property type="project" value="TreeGrafter"/>
</dbReference>
<dbReference type="CDD" id="cd09006">
    <property type="entry name" value="PNP_EcPNPI-like"/>
    <property type="match status" value="1"/>
</dbReference>
<dbReference type="Gene3D" id="3.40.50.1580">
    <property type="entry name" value="Nucleoside phosphorylase domain"/>
    <property type="match status" value="1"/>
</dbReference>
<dbReference type="HAMAP" id="MF_01627">
    <property type="entry name" value="Pur_nucleosid_phosp"/>
    <property type="match status" value="1"/>
</dbReference>
<dbReference type="InterPro" id="IPR004402">
    <property type="entry name" value="DeoD-type"/>
</dbReference>
<dbReference type="InterPro" id="IPR000845">
    <property type="entry name" value="Nucleoside_phosphorylase_d"/>
</dbReference>
<dbReference type="InterPro" id="IPR035994">
    <property type="entry name" value="Nucleoside_phosphorylase_sf"/>
</dbReference>
<dbReference type="NCBIfam" id="TIGR00107">
    <property type="entry name" value="deoD"/>
    <property type="match status" value="1"/>
</dbReference>
<dbReference type="NCBIfam" id="NF004489">
    <property type="entry name" value="PRK05819.1"/>
    <property type="match status" value="1"/>
</dbReference>
<dbReference type="PANTHER" id="PTHR43691:SF11">
    <property type="entry name" value="FI09636P-RELATED"/>
    <property type="match status" value="1"/>
</dbReference>
<dbReference type="PANTHER" id="PTHR43691">
    <property type="entry name" value="URIDINE PHOSPHORYLASE"/>
    <property type="match status" value="1"/>
</dbReference>
<dbReference type="Pfam" id="PF01048">
    <property type="entry name" value="PNP_UDP_1"/>
    <property type="match status" value="1"/>
</dbReference>
<dbReference type="SUPFAM" id="SSF53167">
    <property type="entry name" value="Purine and uridine phosphorylases"/>
    <property type="match status" value="1"/>
</dbReference>